<accession>Q4QN31</accession>
<proteinExistence type="inferred from homology"/>
<dbReference type="EMBL" id="CP000057">
    <property type="protein sequence ID" value="AAX87566.1"/>
    <property type="molecule type" value="Genomic_DNA"/>
</dbReference>
<dbReference type="RefSeq" id="WP_005630840.1">
    <property type="nucleotide sequence ID" value="NC_007146.2"/>
</dbReference>
<dbReference type="SMR" id="Q4QN31"/>
<dbReference type="GeneID" id="93219526"/>
<dbReference type="KEGG" id="hit:NTHI0643"/>
<dbReference type="HOGENOM" id="CLU_074237_2_0_6"/>
<dbReference type="Proteomes" id="UP000002525">
    <property type="component" value="Chromosome"/>
</dbReference>
<dbReference type="GO" id="GO:0022625">
    <property type="term" value="C:cytosolic large ribosomal subunit"/>
    <property type="evidence" value="ECO:0007669"/>
    <property type="project" value="TreeGrafter"/>
</dbReference>
<dbReference type="GO" id="GO:0070180">
    <property type="term" value="F:large ribosomal subunit rRNA binding"/>
    <property type="evidence" value="ECO:0007669"/>
    <property type="project" value="UniProtKB-UniRule"/>
</dbReference>
<dbReference type="GO" id="GO:0003735">
    <property type="term" value="F:structural constituent of ribosome"/>
    <property type="evidence" value="ECO:0007669"/>
    <property type="project" value="InterPro"/>
</dbReference>
<dbReference type="GO" id="GO:0006412">
    <property type="term" value="P:translation"/>
    <property type="evidence" value="ECO:0007669"/>
    <property type="project" value="UniProtKB-UniRule"/>
</dbReference>
<dbReference type="CDD" id="cd00349">
    <property type="entry name" value="Ribosomal_L11"/>
    <property type="match status" value="1"/>
</dbReference>
<dbReference type="FunFam" id="1.10.10.250:FF:000001">
    <property type="entry name" value="50S ribosomal protein L11"/>
    <property type="match status" value="1"/>
</dbReference>
<dbReference type="FunFam" id="3.30.1550.10:FF:000001">
    <property type="entry name" value="50S ribosomal protein L11"/>
    <property type="match status" value="1"/>
</dbReference>
<dbReference type="Gene3D" id="1.10.10.250">
    <property type="entry name" value="Ribosomal protein L11, C-terminal domain"/>
    <property type="match status" value="1"/>
</dbReference>
<dbReference type="Gene3D" id="3.30.1550.10">
    <property type="entry name" value="Ribosomal protein L11/L12, N-terminal domain"/>
    <property type="match status" value="1"/>
</dbReference>
<dbReference type="HAMAP" id="MF_00736">
    <property type="entry name" value="Ribosomal_uL11"/>
    <property type="match status" value="1"/>
</dbReference>
<dbReference type="InterPro" id="IPR000911">
    <property type="entry name" value="Ribosomal_uL11"/>
</dbReference>
<dbReference type="InterPro" id="IPR006519">
    <property type="entry name" value="Ribosomal_uL11_bac-typ"/>
</dbReference>
<dbReference type="InterPro" id="IPR020783">
    <property type="entry name" value="Ribosomal_uL11_C"/>
</dbReference>
<dbReference type="InterPro" id="IPR036769">
    <property type="entry name" value="Ribosomal_uL11_C_sf"/>
</dbReference>
<dbReference type="InterPro" id="IPR020784">
    <property type="entry name" value="Ribosomal_uL11_N"/>
</dbReference>
<dbReference type="InterPro" id="IPR036796">
    <property type="entry name" value="Ribosomal_uL11_N_sf"/>
</dbReference>
<dbReference type="NCBIfam" id="TIGR01632">
    <property type="entry name" value="L11_bact"/>
    <property type="match status" value="1"/>
</dbReference>
<dbReference type="PANTHER" id="PTHR11661">
    <property type="entry name" value="60S RIBOSOMAL PROTEIN L12"/>
    <property type="match status" value="1"/>
</dbReference>
<dbReference type="PANTHER" id="PTHR11661:SF1">
    <property type="entry name" value="LARGE RIBOSOMAL SUBUNIT PROTEIN UL11M"/>
    <property type="match status" value="1"/>
</dbReference>
<dbReference type="Pfam" id="PF00298">
    <property type="entry name" value="Ribosomal_L11"/>
    <property type="match status" value="1"/>
</dbReference>
<dbReference type="Pfam" id="PF03946">
    <property type="entry name" value="Ribosomal_L11_N"/>
    <property type="match status" value="1"/>
</dbReference>
<dbReference type="SMART" id="SM00649">
    <property type="entry name" value="RL11"/>
    <property type="match status" value="1"/>
</dbReference>
<dbReference type="SUPFAM" id="SSF54747">
    <property type="entry name" value="Ribosomal L11/L12e N-terminal domain"/>
    <property type="match status" value="1"/>
</dbReference>
<dbReference type="SUPFAM" id="SSF46906">
    <property type="entry name" value="Ribosomal protein L11, C-terminal domain"/>
    <property type="match status" value="1"/>
</dbReference>
<dbReference type="PROSITE" id="PS00359">
    <property type="entry name" value="RIBOSOMAL_L11"/>
    <property type="match status" value="1"/>
</dbReference>
<comment type="function">
    <text evidence="1">Forms part of the ribosomal stalk which helps the ribosome interact with GTP-bound translation factors.</text>
</comment>
<comment type="subunit">
    <text evidence="1">Part of the ribosomal stalk of the 50S ribosomal subunit. Interacts with L10 and the large rRNA to form the base of the stalk. L10 forms an elongated spine to which L12 dimers bind in a sequential fashion forming a multimeric L10(L12)X complex.</text>
</comment>
<comment type="PTM">
    <text evidence="1">One or more lysine residues are methylated.</text>
</comment>
<comment type="similarity">
    <text evidence="1">Belongs to the universal ribosomal protein uL11 family.</text>
</comment>
<reference key="1">
    <citation type="journal article" date="2005" name="J. Bacteriol.">
        <title>Genomic sequence of an otitis media isolate of nontypeable Haemophilus influenzae: comparative study with H. influenzae serotype d, strain KW20.</title>
        <authorList>
            <person name="Harrison A."/>
            <person name="Dyer D.W."/>
            <person name="Gillaspy A."/>
            <person name="Ray W.C."/>
            <person name="Mungur R."/>
            <person name="Carson M.B."/>
            <person name="Zhong H."/>
            <person name="Gipson J."/>
            <person name="Gipson M."/>
            <person name="Johnson L.S."/>
            <person name="Lewis L."/>
            <person name="Bakaletz L.O."/>
            <person name="Munson R.S. Jr."/>
        </authorList>
    </citation>
    <scope>NUCLEOTIDE SEQUENCE [LARGE SCALE GENOMIC DNA]</scope>
    <source>
        <strain>86-028NP</strain>
    </source>
</reference>
<name>RL11_HAEI8</name>
<organism>
    <name type="scientific">Haemophilus influenzae (strain 86-028NP)</name>
    <dbReference type="NCBI Taxonomy" id="281310"/>
    <lineage>
        <taxon>Bacteria</taxon>
        <taxon>Pseudomonadati</taxon>
        <taxon>Pseudomonadota</taxon>
        <taxon>Gammaproteobacteria</taxon>
        <taxon>Pasteurellales</taxon>
        <taxon>Pasteurellaceae</taxon>
        <taxon>Haemophilus</taxon>
    </lineage>
</organism>
<sequence length="142" mass="14904">MAKKVQAYVKLQVAAGMANPSPPVGPALGQQGVNIMEFCKAFNARTESLEKGLPIPVVITVYADRSFTFVTKTPPAAVLLKKAAGIKSGSGKPNKDKVGKVTLDQVRQIAETKAADMTGATIETKMKSIAGTARSMGLVVEE</sequence>
<feature type="chain" id="PRO_0000258159" description="Large ribosomal subunit protein uL11">
    <location>
        <begin position="1"/>
        <end position="142"/>
    </location>
</feature>
<evidence type="ECO:0000255" key="1">
    <source>
        <dbReference type="HAMAP-Rule" id="MF_00736"/>
    </source>
</evidence>
<evidence type="ECO:0000305" key="2"/>
<protein>
    <recommendedName>
        <fullName evidence="1">Large ribosomal subunit protein uL11</fullName>
    </recommendedName>
    <alternativeName>
        <fullName evidence="2">50S ribosomal protein L11</fullName>
    </alternativeName>
</protein>
<gene>
    <name evidence="1" type="primary">rplK</name>
    <name type="ordered locus">NTHI0643</name>
</gene>
<keyword id="KW-0488">Methylation</keyword>
<keyword id="KW-0687">Ribonucleoprotein</keyword>
<keyword id="KW-0689">Ribosomal protein</keyword>
<keyword id="KW-0694">RNA-binding</keyword>
<keyword id="KW-0699">rRNA-binding</keyword>